<name>UVRB_STRAW</name>
<accession>Q829Y6</accession>
<gene>
    <name evidence="1" type="primary">uvrB</name>
    <name type="ordered locus">SAV_6273</name>
</gene>
<feature type="chain" id="PRO_0000227371" description="UvrABC system protein B">
    <location>
        <begin position="1"/>
        <end position="713"/>
    </location>
</feature>
<feature type="domain" description="Helicase ATP-binding" evidence="1">
    <location>
        <begin position="35"/>
        <end position="421"/>
    </location>
</feature>
<feature type="domain" description="Helicase C-terminal" evidence="1">
    <location>
        <begin position="438"/>
        <end position="604"/>
    </location>
</feature>
<feature type="domain" description="UVR" evidence="1">
    <location>
        <begin position="668"/>
        <end position="703"/>
    </location>
</feature>
<feature type="region of interest" description="Disordered" evidence="2">
    <location>
        <begin position="624"/>
        <end position="663"/>
    </location>
</feature>
<feature type="short sequence motif" description="Beta-hairpin">
    <location>
        <begin position="101"/>
        <end position="124"/>
    </location>
</feature>
<feature type="compositionally biased region" description="Low complexity" evidence="2">
    <location>
        <begin position="639"/>
        <end position="649"/>
    </location>
</feature>
<feature type="compositionally biased region" description="Basic and acidic residues" evidence="2">
    <location>
        <begin position="653"/>
        <end position="663"/>
    </location>
</feature>
<feature type="binding site" evidence="1">
    <location>
        <begin position="48"/>
        <end position="55"/>
    </location>
    <ligand>
        <name>ATP</name>
        <dbReference type="ChEBI" id="CHEBI:30616"/>
    </ligand>
</feature>
<organism>
    <name type="scientific">Streptomyces avermitilis (strain ATCC 31267 / DSM 46492 / JCM 5070 / NBRC 14893 / NCIMB 12804 / NRRL 8165 / MA-4680)</name>
    <dbReference type="NCBI Taxonomy" id="227882"/>
    <lineage>
        <taxon>Bacteria</taxon>
        <taxon>Bacillati</taxon>
        <taxon>Actinomycetota</taxon>
        <taxon>Actinomycetes</taxon>
        <taxon>Kitasatosporales</taxon>
        <taxon>Streptomycetaceae</taxon>
        <taxon>Streptomyces</taxon>
    </lineage>
</organism>
<sequence>MRPVSKIERTVAPFEVVSPYQPSGDQPAAIAELDRRIRAGEKDVVLLGATGTGKSATTAWMIEKLQRPTLVMAPNKTLAAQLANEFRELLPNNAVEYFVSYYDYYQPEAYVPQSDTYIEKDSSINEEVERLRHSATNSLLTRRDVVVVASVSCIYGLGTPQEYVDRMVPLRVGDEVDRDDLLRRFVDIQYTRNDLAFTRGTFRVRGDTIEIFPVYEELAVRIEMFGDEIEALSTLHPLTGEIISDDQHLYVFPASHYVAGPERLERAANDIEKELGERLTELEKQGKLLEAQRLRMRTTYDLEMLRQIGSCSGVENYSMHFDGREPGSPPNTLLDYFPDDFLLVIDESHVTVPQIGAMYEGDASRKRTLVDHGFRLPSALDNRPLKWEEFQERIGQAVYLSATPGKYELSRGDGFVEQIIRPTGLIDPEVVVKPTEGQIDDLVHEIRKRTEKDERVLVTTLTKKMAEDLTDYFLELGIQVRYLHSDVDTLRRVELLRELRAGEYDVLVGINLLREGLDLPEVSLVAILDADKEGFLRSGTSLIQTIGRAARNVSGQVHMYADKITPAMEKAIDETNRRREKQVAYNKEKGIDPQPLRKKINDIVAQIAREDIDTEQLLGSGYRQAKDGKGAKAPVPSLGGKAAAKGAKSAKGKAKETVPTDRPAAKLAEEIEELTNRMRAAAADLQFEIAARLRDEVSEMKKELRQMKEAGLA</sequence>
<keyword id="KW-0067">ATP-binding</keyword>
<keyword id="KW-0963">Cytoplasm</keyword>
<keyword id="KW-0227">DNA damage</keyword>
<keyword id="KW-0228">DNA excision</keyword>
<keyword id="KW-0234">DNA repair</keyword>
<keyword id="KW-0267">Excision nuclease</keyword>
<keyword id="KW-0547">Nucleotide-binding</keyword>
<keyword id="KW-1185">Reference proteome</keyword>
<keyword id="KW-0742">SOS response</keyword>
<comment type="function">
    <text evidence="1">The UvrABC repair system catalyzes the recognition and processing of DNA lesions. A damage recognition complex composed of 2 UvrA and 2 UvrB subunits scans DNA for abnormalities. Upon binding of the UvrA(2)B(2) complex to a putative damaged site, the DNA wraps around one UvrB monomer. DNA wrap is dependent on ATP binding by UvrB and probably causes local melting of the DNA helix, facilitating insertion of UvrB beta-hairpin between the DNA strands. Then UvrB probes one DNA strand for the presence of a lesion. If a lesion is found the UvrA subunits dissociate and the UvrB-DNA preincision complex is formed. This complex is subsequently bound by UvrC and the second UvrB is released. If no lesion is found, the DNA wraps around the other UvrB subunit that will check the other stand for damage.</text>
</comment>
<comment type="subunit">
    <text evidence="1">Forms a heterotetramer with UvrA during the search for lesions. Interacts with UvrC in an incision complex.</text>
</comment>
<comment type="subcellular location">
    <subcellularLocation>
        <location evidence="1">Cytoplasm</location>
    </subcellularLocation>
</comment>
<comment type="domain">
    <text evidence="1">The beta-hairpin motif is involved in DNA binding.</text>
</comment>
<comment type="similarity">
    <text evidence="1">Belongs to the UvrB family.</text>
</comment>
<protein>
    <recommendedName>
        <fullName evidence="1">UvrABC system protein B</fullName>
        <shortName evidence="1">Protein UvrB</shortName>
    </recommendedName>
    <alternativeName>
        <fullName evidence="1">Excinuclease ABC subunit B</fullName>
    </alternativeName>
</protein>
<evidence type="ECO:0000255" key="1">
    <source>
        <dbReference type="HAMAP-Rule" id="MF_00204"/>
    </source>
</evidence>
<evidence type="ECO:0000256" key="2">
    <source>
        <dbReference type="SAM" id="MobiDB-lite"/>
    </source>
</evidence>
<dbReference type="EMBL" id="BA000030">
    <property type="protein sequence ID" value="BAC73984.1"/>
    <property type="molecule type" value="Genomic_DNA"/>
</dbReference>
<dbReference type="RefSeq" id="WP_010987674.1">
    <property type="nucleotide sequence ID" value="NZ_JZJK01000089.1"/>
</dbReference>
<dbReference type="SMR" id="Q829Y6"/>
<dbReference type="GeneID" id="41543348"/>
<dbReference type="KEGG" id="sma:SAVERM_6273"/>
<dbReference type="eggNOG" id="COG0556">
    <property type="taxonomic scope" value="Bacteria"/>
</dbReference>
<dbReference type="HOGENOM" id="CLU_009621_2_1_11"/>
<dbReference type="OrthoDB" id="9806651at2"/>
<dbReference type="Proteomes" id="UP000000428">
    <property type="component" value="Chromosome"/>
</dbReference>
<dbReference type="GO" id="GO:0005737">
    <property type="term" value="C:cytoplasm"/>
    <property type="evidence" value="ECO:0007669"/>
    <property type="project" value="UniProtKB-SubCell"/>
</dbReference>
<dbReference type="GO" id="GO:0009380">
    <property type="term" value="C:excinuclease repair complex"/>
    <property type="evidence" value="ECO:0007669"/>
    <property type="project" value="InterPro"/>
</dbReference>
<dbReference type="GO" id="GO:0005524">
    <property type="term" value="F:ATP binding"/>
    <property type="evidence" value="ECO:0007669"/>
    <property type="project" value="UniProtKB-UniRule"/>
</dbReference>
<dbReference type="GO" id="GO:0016887">
    <property type="term" value="F:ATP hydrolysis activity"/>
    <property type="evidence" value="ECO:0007669"/>
    <property type="project" value="InterPro"/>
</dbReference>
<dbReference type="GO" id="GO:0003677">
    <property type="term" value="F:DNA binding"/>
    <property type="evidence" value="ECO:0007669"/>
    <property type="project" value="UniProtKB-UniRule"/>
</dbReference>
<dbReference type="GO" id="GO:0009381">
    <property type="term" value="F:excinuclease ABC activity"/>
    <property type="evidence" value="ECO:0007669"/>
    <property type="project" value="UniProtKB-UniRule"/>
</dbReference>
<dbReference type="GO" id="GO:0006289">
    <property type="term" value="P:nucleotide-excision repair"/>
    <property type="evidence" value="ECO:0007669"/>
    <property type="project" value="UniProtKB-UniRule"/>
</dbReference>
<dbReference type="GO" id="GO:0009432">
    <property type="term" value="P:SOS response"/>
    <property type="evidence" value="ECO:0007669"/>
    <property type="project" value="UniProtKB-UniRule"/>
</dbReference>
<dbReference type="CDD" id="cd17916">
    <property type="entry name" value="DEXHc_UvrB"/>
    <property type="match status" value="1"/>
</dbReference>
<dbReference type="CDD" id="cd18790">
    <property type="entry name" value="SF2_C_UvrB"/>
    <property type="match status" value="1"/>
</dbReference>
<dbReference type="Gene3D" id="3.40.50.300">
    <property type="entry name" value="P-loop containing nucleotide triphosphate hydrolases"/>
    <property type="match status" value="3"/>
</dbReference>
<dbReference type="Gene3D" id="4.10.860.10">
    <property type="entry name" value="UVR domain"/>
    <property type="match status" value="1"/>
</dbReference>
<dbReference type="HAMAP" id="MF_00204">
    <property type="entry name" value="UvrB"/>
    <property type="match status" value="1"/>
</dbReference>
<dbReference type="InterPro" id="IPR006935">
    <property type="entry name" value="Helicase/UvrB_N"/>
</dbReference>
<dbReference type="InterPro" id="IPR014001">
    <property type="entry name" value="Helicase_ATP-bd"/>
</dbReference>
<dbReference type="InterPro" id="IPR001650">
    <property type="entry name" value="Helicase_C-like"/>
</dbReference>
<dbReference type="InterPro" id="IPR027417">
    <property type="entry name" value="P-loop_NTPase"/>
</dbReference>
<dbReference type="InterPro" id="IPR001943">
    <property type="entry name" value="UVR_dom"/>
</dbReference>
<dbReference type="InterPro" id="IPR036876">
    <property type="entry name" value="UVR_dom_sf"/>
</dbReference>
<dbReference type="InterPro" id="IPR004807">
    <property type="entry name" value="UvrB"/>
</dbReference>
<dbReference type="InterPro" id="IPR041471">
    <property type="entry name" value="UvrB_inter"/>
</dbReference>
<dbReference type="InterPro" id="IPR024759">
    <property type="entry name" value="UvrB_YAD/RRR_dom"/>
</dbReference>
<dbReference type="NCBIfam" id="NF003673">
    <property type="entry name" value="PRK05298.1"/>
    <property type="match status" value="1"/>
</dbReference>
<dbReference type="NCBIfam" id="TIGR00631">
    <property type="entry name" value="uvrb"/>
    <property type="match status" value="1"/>
</dbReference>
<dbReference type="PANTHER" id="PTHR24029">
    <property type="entry name" value="UVRABC SYSTEM PROTEIN B"/>
    <property type="match status" value="1"/>
</dbReference>
<dbReference type="PANTHER" id="PTHR24029:SF0">
    <property type="entry name" value="UVRABC SYSTEM PROTEIN B"/>
    <property type="match status" value="1"/>
</dbReference>
<dbReference type="Pfam" id="PF00271">
    <property type="entry name" value="Helicase_C"/>
    <property type="match status" value="1"/>
</dbReference>
<dbReference type="Pfam" id="PF04851">
    <property type="entry name" value="ResIII"/>
    <property type="match status" value="1"/>
</dbReference>
<dbReference type="Pfam" id="PF02151">
    <property type="entry name" value="UVR"/>
    <property type="match status" value="1"/>
</dbReference>
<dbReference type="Pfam" id="PF12344">
    <property type="entry name" value="UvrB"/>
    <property type="match status" value="1"/>
</dbReference>
<dbReference type="Pfam" id="PF17757">
    <property type="entry name" value="UvrB_inter"/>
    <property type="match status" value="1"/>
</dbReference>
<dbReference type="SMART" id="SM00487">
    <property type="entry name" value="DEXDc"/>
    <property type="match status" value="1"/>
</dbReference>
<dbReference type="SMART" id="SM00490">
    <property type="entry name" value="HELICc"/>
    <property type="match status" value="1"/>
</dbReference>
<dbReference type="SUPFAM" id="SSF46600">
    <property type="entry name" value="C-terminal UvrC-binding domain of UvrB"/>
    <property type="match status" value="1"/>
</dbReference>
<dbReference type="SUPFAM" id="SSF52540">
    <property type="entry name" value="P-loop containing nucleoside triphosphate hydrolases"/>
    <property type="match status" value="2"/>
</dbReference>
<dbReference type="PROSITE" id="PS51192">
    <property type="entry name" value="HELICASE_ATP_BIND_1"/>
    <property type="match status" value="1"/>
</dbReference>
<dbReference type="PROSITE" id="PS51194">
    <property type="entry name" value="HELICASE_CTER"/>
    <property type="match status" value="1"/>
</dbReference>
<dbReference type="PROSITE" id="PS50151">
    <property type="entry name" value="UVR"/>
    <property type="match status" value="1"/>
</dbReference>
<proteinExistence type="inferred from homology"/>
<reference key="1">
    <citation type="journal article" date="2001" name="Proc. Natl. Acad. Sci. U.S.A.">
        <title>Genome sequence of an industrial microorganism Streptomyces avermitilis: deducing the ability of producing secondary metabolites.</title>
        <authorList>
            <person name="Omura S."/>
            <person name="Ikeda H."/>
            <person name="Ishikawa J."/>
            <person name="Hanamoto A."/>
            <person name="Takahashi C."/>
            <person name="Shinose M."/>
            <person name="Takahashi Y."/>
            <person name="Horikawa H."/>
            <person name="Nakazawa H."/>
            <person name="Osonoe T."/>
            <person name="Kikuchi H."/>
            <person name="Shiba T."/>
            <person name="Sakaki Y."/>
            <person name="Hattori M."/>
        </authorList>
    </citation>
    <scope>NUCLEOTIDE SEQUENCE [LARGE SCALE GENOMIC DNA]</scope>
    <source>
        <strain>ATCC 31267 / DSM 46492 / JCM 5070 / NBRC 14893 / NCIMB 12804 / NRRL 8165 / MA-4680</strain>
    </source>
</reference>
<reference key="2">
    <citation type="journal article" date="2003" name="Nat. Biotechnol.">
        <title>Complete genome sequence and comparative analysis of the industrial microorganism Streptomyces avermitilis.</title>
        <authorList>
            <person name="Ikeda H."/>
            <person name="Ishikawa J."/>
            <person name="Hanamoto A."/>
            <person name="Shinose M."/>
            <person name="Kikuchi H."/>
            <person name="Shiba T."/>
            <person name="Sakaki Y."/>
            <person name="Hattori M."/>
            <person name="Omura S."/>
        </authorList>
    </citation>
    <scope>NUCLEOTIDE SEQUENCE [LARGE SCALE GENOMIC DNA]</scope>
    <source>
        <strain>ATCC 31267 / DSM 46492 / JCM 5070 / NBRC 14893 / NCIMB 12804 / NRRL 8165 / MA-4680</strain>
    </source>
</reference>